<gene>
    <name type="primary">ap2a1-1</name>
    <name type="ORF">DDB_G0273439</name>
</gene>
<gene>
    <name type="primary">ap2a1-2</name>
    <name type="ORF">DDB_G0273501</name>
</gene>
<protein>
    <recommendedName>
        <fullName>AP-2 complex subunit alpha-2</fullName>
    </recommendedName>
    <alternativeName>
        <fullName>100 kDa coated vesicle protein C</fullName>
    </alternativeName>
    <alternativeName>
        <fullName>Adaptor protein complex AP-2 subunit alpha-2</fullName>
    </alternativeName>
    <alternativeName>
        <fullName>Adaptor-related protein complex 2 subunit alpha-2</fullName>
    </alternativeName>
    <alternativeName>
        <fullName>Alpha-adaptin C</fullName>
    </alternativeName>
    <alternativeName>
        <fullName>Alpha2-adaptin</fullName>
    </alternativeName>
    <alternativeName>
        <fullName>Clathrin assembly protein complex 2 alpha-C large chain</fullName>
    </alternativeName>
    <alternativeName>
        <fullName>Plasma membrane adaptor HA2/AP2 adaptin alpha C subunit</fullName>
    </alternativeName>
</protein>
<keyword id="KW-1003">Cell membrane</keyword>
<keyword id="KW-0168">Coated pit</keyword>
<keyword id="KW-0254">Endocytosis</keyword>
<keyword id="KW-0446">Lipid-binding</keyword>
<keyword id="KW-0472">Membrane</keyword>
<keyword id="KW-0653">Protein transport</keyword>
<keyword id="KW-1185">Reference proteome</keyword>
<keyword id="KW-0677">Repeat</keyword>
<keyword id="KW-0813">Transport</keyword>
<evidence type="ECO:0000250" key="1"/>
<evidence type="ECO:0000256" key="2">
    <source>
        <dbReference type="SAM" id="MobiDB-lite"/>
    </source>
</evidence>
<evidence type="ECO:0000305" key="3"/>
<organism>
    <name type="scientific">Dictyostelium discoideum</name>
    <name type="common">Social amoeba</name>
    <dbReference type="NCBI Taxonomy" id="44689"/>
    <lineage>
        <taxon>Eukaryota</taxon>
        <taxon>Amoebozoa</taxon>
        <taxon>Evosea</taxon>
        <taxon>Eumycetozoa</taxon>
        <taxon>Dictyostelia</taxon>
        <taxon>Dictyosteliales</taxon>
        <taxon>Dictyosteliaceae</taxon>
        <taxon>Dictyostelium</taxon>
    </lineage>
</organism>
<dbReference type="EMBL" id="AAFI02000010">
    <property type="protein sequence ID" value="EAL70705.2"/>
    <property type="molecule type" value="Genomic_DNA"/>
</dbReference>
<dbReference type="EMBL" id="AAFI02000010">
    <property type="protein sequence ID" value="EAL70674.1"/>
    <property type="molecule type" value="Genomic_DNA"/>
</dbReference>
<dbReference type="RefSeq" id="XP_644619.1">
    <property type="nucleotide sequence ID" value="XM_639527.1"/>
</dbReference>
<dbReference type="RefSeq" id="XP_644631.2">
    <property type="nucleotide sequence ID" value="XM_639539.2"/>
</dbReference>
<dbReference type="SMR" id="Q86KI1"/>
<dbReference type="FunCoup" id="Q86KI1">
    <property type="interactions" value="917"/>
</dbReference>
<dbReference type="STRING" id="44689.Q86KI1"/>
<dbReference type="PaxDb" id="44689-DDB0234235"/>
<dbReference type="EnsemblProtists" id="EAL70674">
    <property type="protein sequence ID" value="EAL70674"/>
    <property type="gene ID" value="DDB_G0273439"/>
</dbReference>
<dbReference type="EnsemblProtists" id="EAL70705">
    <property type="protein sequence ID" value="EAL70705"/>
    <property type="gene ID" value="DDB_G0273501"/>
</dbReference>
<dbReference type="GeneID" id="8618983"/>
<dbReference type="GeneID" id="8618994"/>
<dbReference type="KEGG" id="ddi:DDB_G0273439"/>
<dbReference type="KEGG" id="ddi:DDB_G0273501"/>
<dbReference type="dictyBase" id="DDB_G0273439">
    <property type="gene designation" value="ap2a1-1"/>
</dbReference>
<dbReference type="dictyBase" id="DDB_G0273501">
    <property type="gene designation" value="ap2a1-2"/>
</dbReference>
<dbReference type="VEuPathDB" id="AmoebaDB:DDB_G0273439"/>
<dbReference type="eggNOG" id="KOG1077">
    <property type="taxonomic scope" value="Eukaryota"/>
</dbReference>
<dbReference type="HOGENOM" id="CLU_003824_1_0_1"/>
<dbReference type="InParanoid" id="Q86KI1"/>
<dbReference type="OMA" id="PVLMHRY"/>
<dbReference type="PhylomeDB" id="Q86KI1"/>
<dbReference type="Reactome" id="R-DDI-437239">
    <property type="pathway name" value="Recycling pathway of L1"/>
</dbReference>
<dbReference type="Reactome" id="R-DDI-6798695">
    <property type="pathway name" value="Neutrophil degranulation"/>
</dbReference>
<dbReference type="Reactome" id="R-DDI-8856825">
    <property type="pathway name" value="Cargo recognition for clathrin-mediated endocytosis"/>
</dbReference>
<dbReference type="Reactome" id="R-DDI-8856828">
    <property type="pathway name" value="Clathrin-mediated endocytosis"/>
</dbReference>
<dbReference type="Reactome" id="R-DDI-8866427">
    <property type="pathway name" value="VLDLR internalisation and degradation"/>
</dbReference>
<dbReference type="Reactome" id="R-DDI-8964038">
    <property type="pathway name" value="LDL clearance"/>
</dbReference>
<dbReference type="PRO" id="PR:Q86KI1"/>
<dbReference type="Proteomes" id="UP000002195">
    <property type="component" value="Chromosome 2"/>
</dbReference>
<dbReference type="GO" id="GO:0030122">
    <property type="term" value="C:AP-2 adaptor complex"/>
    <property type="evidence" value="ECO:0000314"/>
    <property type="project" value="dictyBase"/>
</dbReference>
<dbReference type="GO" id="GO:0030132">
    <property type="term" value="C:clathrin coat of coated pit"/>
    <property type="evidence" value="ECO:0000314"/>
    <property type="project" value="dictyBase"/>
</dbReference>
<dbReference type="GO" id="GO:0030136">
    <property type="term" value="C:clathrin-coated vesicle"/>
    <property type="evidence" value="ECO:0000314"/>
    <property type="project" value="dictyBase"/>
</dbReference>
<dbReference type="GO" id="GO:0000331">
    <property type="term" value="C:contractile vacuole"/>
    <property type="evidence" value="ECO:0000314"/>
    <property type="project" value="dictyBase"/>
</dbReference>
<dbReference type="GO" id="GO:0005886">
    <property type="term" value="C:plasma membrane"/>
    <property type="evidence" value="ECO:0000314"/>
    <property type="project" value="dictyBase"/>
</dbReference>
<dbReference type="GO" id="GO:0035615">
    <property type="term" value="F:clathrin adaptor activity"/>
    <property type="evidence" value="ECO:0000318"/>
    <property type="project" value="GO_Central"/>
</dbReference>
<dbReference type="GO" id="GO:0008289">
    <property type="term" value="F:lipid binding"/>
    <property type="evidence" value="ECO:0007669"/>
    <property type="project" value="UniProtKB-KW"/>
</dbReference>
<dbReference type="GO" id="GO:0072583">
    <property type="term" value="P:clathrin-dependent endocytosis"/>
    <property type="evidence" value="ECO:0000318"/>
    <property type="project" value="GO_Central"/>
</dbReference>
<dbReference type="GO" id="GO:0006971">
    <property type="term" value="P:hypotonic response"/>
    <property type="evidence" value="ECO:0000315"/>
    <property type="project" value="dictyBase"/>
</dbReference>
<dbReference type="GO" id="GO:0006886">
    <property type="term" value="P:intracellular protein transport"/>
    <property type="evidence" value="ECO:0007669"/>
    <property type="project" value="InterPro"/>
</dbReference>
<dbReference type="GO" id="GO:0009992">
    <property type="term" value="P:intracellular water homeostasis"/>
    <property type="evidence" value="ECO:0000315"/>
    <property type="project" value="dictyBase"/>
</dbReference>
<dbReference type="FunFam" id="1.25.10.10:FF:000020">
    <property type="entry name" value="AP-2 complex subunit alpha"/>
    <property type="match status" value="1"/>
</dbReference>
<dbReference type="Gene3D" id="2.60.40.1230">
    <property type="match status" value="1"/>
</dbReference>
<dbReference type="Gene3D" id="1.25.10.10">
    <property type="entry name" value="Leucine-rich Repeat Variant"/>
    <property type="match status" value="1"/>
</dbReference>
<dbReference type="Gene3D" id="3.30.310.10">
    <property type="entry name" value="TATA-Binding Protein"/>
    <property type="match status" value="1"/>
</dbReference>
<dbReference type="InterPro" id="IPR050840">
    <property type="entry name" value="Adaptor_Complx_Large_Subunit"/>
</dbReference>
<dbReference type="InterPro" id="IPR017104">
    <property type="entry name" value="AP2_complex_asu"/>
</dbReference>
<dbReference type="InterPro" id="IPR011989">
    <property type="entry name" value="ARM-like"/>
</dbReference>
<dbReference type="InterPro" id="IPR016024">
    <property type="entry name" value="ARM-type_fold"/>
</dbReference>
<dbReference type="InterPro" id="IPR002553">
    <property type="entry name" value="Clathrin/coatomer_adapt-like_N"/>
</dbReference>
<dbReference type="InterPro" id="IPR003164">
    <property type="entry name" value="Clathrin_a-adaptin_app_sub_C"/>
</dbReference>
<dbReference type="InterPro" id="IPR008152">
    <property type="entry name" value="Clathrin_a/b/g-adaptin_app_Ig"/>
</dbReference>
<dbReference type="InterPro" id="IPR013041">
    <property type="entry name" value="Clathrin_app_Ig-like_sf"/>
</dbReference>
<dbReference type="InterPro" id="IPR009028">
    <property type="entry name" value="Coatomer/calthrin_app_sub_C"/>
</dbReference>
<dbReference type="InterPro" id="IPR012295">
    <property type="entry name" value="TBP_dom_sf"/>
</dbReference>
<dbReference type="PANTHER" id="PTHR22780">
    <property type="entry name" value="ADAPTIN, ALPHA/GAMMA/EPSILON"/>
    <property type="match status" value="1"/>
</dbReference>
<dbReference type="Pfam" id="PF01602">
    <property type="entry name" value="Adaptin_N"/>
    <property type="match status" value="1"/>
</dbReference>
<dbReference type="Pfam" id="PF02296">
    <property type="entry name" value="Alpha_adaptin_C"/>
    <property type="match status" value="1"/>
</dbReference>
<dbReference type="Pfam" id="PF02883">
    <property type="entry name" value="Alpha_adaptinC2"/>
    <property type="match status" value="1"/>
</dbReference>
<dbReference type="PIRSF" id="PIRSF037091">
    <property type="entry name" value="AP2_complex_alpha"/>
    <property type="match status" value="1"/>
</dbReference>
<dbReference type="SMART" id="SM00809">
    <property type="entry name" value="Alpha_adaptinC2"/>
    <property type="match status" value="1"/>
</dbReference>
<dbReference type="SUPFAM" id="SSF48371">
    <property type="entry name" value="ARM repeat"/>
    <property type="match status" value="1"/>
</dbReference>
<dbReference type="SUPFAM" id="SSF49348">
    <property type="entry name" value="Clathrin adaptor appendage domain"/>
    <property type="match status" value="1"/>
</dbReference>
<dbReference type="SUPFAM" id="SSF55711">
    <property type="entry name" value="Subdomain of clathrin and coatomer appendage domain"/>
    <property type="match status" value="1"/>
</dbReference>
<proteinExistence type="inferred from homology"/>
<reference key="1">
    <citation type="journal article" date="2002" name="Nature">
        <title>Sequence and analysis of chromosome 2 of Dictyostelium discoideum.</title>
        <authorList>
            <person name="Gloeckner G."/>
            <person name="Eichinger L."/>
            <person name="Szafranski K."/>
            <person name="Pachebat J.A."/>
            <person name="Bankier A.T."/>
            <person name="Dear P.H."/>
            <person name="Lehmann R."/>
            <person name="Baumgart C."/>
            <person name="Parra G."/>
            <person name="Abril J.F."/>
            <person name="Guigo R."/>
            <person name="Kumpf K."/>
            <person name="Tunggal B."/>
            <person name="Cox E.C."/>
            <person name="Quail M.A."/>
            <person name="Platzer M."/>
            <person name="Rosenthal A."/>
            <person name="Noegel A.A."/>
        </authorList>
    </citation>
    <scope>NUCLEOTIDE SEQUENCE [LARGE SCALE GENOMIC DNA]</scope>
    <source>
        <strain>AX4</strain>
    </source>
</reference>
<reference key="2">
    <citation type="journal article" date="2005" name="Nature">
        <title>The genome of the social amoeba Dictyostelium discoideum.</title>
        <authorList>
            <person name="Eichinger L."/>
            <person name="Pachebat J.A."/>
            <person name="Gloeckner G."/>
            <person name="Rajandream M.A."/>
            <person name="Sucgang R."/>
            <person name="Berriman M."/>
            <person name="Song J."/>
            <person name="Olsen R."/>
            <person name="Szafranski K."/>
            <person name="Xu Q."/>
            <person name="Tunggal B."/>
            <person name="Kummerfeld S."/>
            <person name="Madera M."/>
            <person name="Konfortov B.A."/>
            <person name="Rivero F."/>
            <person name="Bankier A.T."/>
            <person name="Lehmann R."/>
            <person name="Hamlin N."/>
            <person name="Davies R."/>
            <person name="Gaudet P."/>
            <person name="Fey P."/>
            <person name="Pilcher K."/>
            <person name="Chen G."/>
            <person name="Saunders D."/>
            <person name="Sodergren E.J."/>
            <person name="Davis P."/>
            <person name="Kerhornou A."/>
            <person name="Nie X."/>
            <person name="Hall N."/>
            <person name="Anjard C."/>
            <person name="Hemphill L."/>
            <person name="Bason N."/>
            <person name="Farbrother P."/>
            <person name="Desany B."/>
            <person name="Just E."/>
            <person name="Morio T."/>
            <person name="Rost R."/>
            <person name="Churcher C.M."/>
            <person name="Cooper J."/>
            <person name="Haydock S."/>
            <person name="van Driessche N."/>
            <person name="Cronin A."/>
            <person name="Goodhead I."/>
            <person name="Muzny D.M."/>
            <person name="Mourier T."/>
            <person name="Pain A."/>
            <person name="Lu M."/>
            <person name="Harper D."/>
            <person name="Lindsay R."/>
            <person name="Hauser H."/>
            <person name="James K.D."/>
            <person name="Quiles M."/>
            <person name="Madan Babu M."/>
            <person name="Saito T."/>
            <person name="Buchrieser C."/>
            <person name="Wardroper A."/>
            <person name="Felder M."/>
            <person name="Thangavelu M."/>
            <person name="Johnson D."/>
            <person name="Knights A."/>
            <person name="Loulseged H."/>
            <person name="Mungall K.L."/>
            <person name="Oliver K."/>
            <person name="Price C."/>
            <person name="Quail M.A."/>
            <person name="Urushihara H."/>
            <person name="Hernandez J."/>
            <person name="Rabbinowitsch E."/>
            <person name="Steffen D."/>
            <person name="Sanders M."/>
            <person name="Ma J."/>
            <person name="Kohara Y."/>
            <person name="Sharp S."/>
            <person name="Simmonds M.N."/>
            <person name="Spiegler S."/>
            <person name="Tivey A."/>
            <person name="Sugano S."/>
            <person name="White B."/>
            <person name="Walker D."/>
            <person name="Woodward J.R."/>
            <person name="Winckler T."/>
            <person name="Tanaka Y."/>
            <person name="Shaulsky G."/>
            <person name="Schleicher M."/>
            <person name="Weinstock G.M."/>
            <person name="Rosenthal A."/>
            <person name="Cox E.C."/>
            <person name="Chisholm R.L."/>
            <person name="Gibbs R.A."/>
            <person name="Loomis W.F."/>
            <person name="Platzer M."/>
            <person name="Kay R.R."/>
            <person name="Williams J.G."/>
            <person name="Dear P.H."/>
            <person name="Noegel A.A."/>
            <person name="Barrell B.G."/>
            <person name="Kuspa A."/>
        </authorList>
    </citation>
    <scope>NUCLEOTIDE SEQUENCE [LARGE SCALE GENOMIC DNA]</scope>
    <source>
        <strain>AX4</strain>
    </source>
</reference>
<name>AP2A2_DICDI</name>
<feature type="chain" id="PRO_0000328675" description="AP-2 complex subunit alpha-2">
    <location>
        <begin position="1"/>
        <end position="989"/>
    </location>
</feature>
<feature type="repeat" description="HEAT 1">
    <location>
        <begin position="112"/>
        <end position="149"/>
    </location>
</feature>
<feature type="repeat" description="HEAT 2">
    <location>
        <begin position="188"/>
        <end position="225"/>
    </location>
</feature>
<feature type="repeat" description="HEAT 3">
    <location>
        <begin position="368"/>
        <end position="402"/>
    </location>
</feature>
<feature type="repeat" description="HEAT 4">
    <location>
        <begin position="403"/>
        <end position="440"/>
    </location>
</feature>
<feature type="region of interest" description="Disordered" evidence="2">
    <location>
        <begin position="610"/>
        <end position="745"/>
    </location>
</feature>
<feature type="compositionally biased region" description="Low complexity" evidence="2">
    <location>
        <begin position="611"/>
        <end position="623"/>
    </location>
</feature>
<feature type="compositionally biased region" description="Polar residues" evidence="2">
    <location>
        <begin position="624"/>
        <end position="638"/>
    </location>
</feature>
<feature type="compositionally biased region" description="Low complexity" evidence="2">
    <location>
        <begin position="639"/>
        <end position="703"/>
    </location>
</feature>
<feature type="compositionally biased region" description="Polar residues" evidence="2">
    <location>
        <begin position="704"/>
        <end position="714"/>
    </location>
</feature>
<feature type="compositionally biased region" description="Low complexity" evidence="2">
    <location>
        <begin position="715"/>
        <end position="745"/>
    </location>
</feature>
<feature type="sequence conflict" description="In Ref. 1; EAL70705." evidence="3" ref="1">
    <original>T</original>
    <variation>S</variation>
    <location>
        <position position="614"/>
    </location>
</feature>
<feature type="sequence conflict" description="In Ref. 1; EAL70705." evidence="3" ref="1">
    <original>NT</original>
    <variation>GS</variation>
    <location>
        <begin position="617"/>
        <end position="618"/>
    </location>
</feature>
<accession>Q86KI1</accession>
<accession>Q557K4</accession>
<accession>Q557L6</accession>
<sequence length="989" mass="110700">MSMNVTNPNIAKTSMRGLTNFISDLRNSPSKENEEKRVTKEMAHIRKEFKENKNIDGYQRRKYVCKLVYMYMLGYELDFGHMEAVTLLSSTKFSEKQIGYIALGILLNEQHEMLPLIINSFKEDLLARSDYFQSLALAAICNIGGKEVAEFLSPLIQKLLIANTSSPMVKKRCALAILRMNRKHIGLVTPDSWVERLVSVLDEPDFGVLTSLMSLLIELASENPIGWEPAIPKVIHLLKKIIINKEFPKEYVYYHVTCPWLQVKLLKFLRYFPAPDDSQGGKVLGEILTAVFAQSESAKAGTVNHKNSLNAVLFEAINLIIHLDNDPVLLKQTSLLLGRFITVKETNIRYLGLEAMSHFASLSNETSIMIKKYQDTVLLSLKDSDISIRRRALDLLYGMCDKNTCKHIVAELLSYLQTADYAIREELVIKIANLAEKFASNYSWYVDVILQLITTAGDFVSDDIWFRVVKIVTNHEDIQAYAASTVFNALQSRNCHETLIKVGGYILGEFGHLIADNPQSSPLVQFNILHSKFNTCGAPTKALLLSTYAKFVNLFPELTQQTQEVFKQHQSYIDAEIQQRACEYLNLTSLNEDLMQTVLDVIPAFIDAKDNSNTTSNTANNSNMINSQDSKISSGGFNQSPQPSQQQQQQQPPQQQQAQLQQNVSSNGLDLLDPFGLGLGNQQQQQQQPVQQAQPVYQQQQQAESFSPVQSDTVSSFGQQQQQQQGGFSSPTIQASSSPISSGGSDPMQIKILASYKRLCLVSEGVLYEDSMLQVGLKSEYQSGQGRLMLYYGNSSAFPLTNFNVTLNSIAGLTLQPQSIAPVIQPKAQLQQPVTFSCTSEFTESPVITINFLTPGKPITITLRLPIVISKFFEPLRLSSGDFFARWKTISGKPLEIQEIFKSTKPIDIQSYNRVIQEGLNITVLKQVDPNPNNIVASCLFPFGSNGQPINSYIRIETNPQANMCRLTIRSQSATLTNTIKNLLISHLQ</sequence>
<comment type="function">
    <text evidence="1">Component of the adaptor complexes which link clathrin to receptors in coated vesicles. Clathrin-associated protein complexes are believed to interact with the cytoplasmic tails of membrane proteins, leading to their selection and concentration (By similarity).</text>
</comment>
<comment type="subunit">
    <text>Adaptor protein complex 2 (AP-2) is a heterotetramer composed of two large adaptins (alpha-type and beta-type subunits), a medium adaptin (mu-type subunit AP50) and a small adaptin (sigma-type subunit AP17).</text>
</comment>
<comment type="subcellular location">
    <subcellularLocation>
        <location>Cell membrane</location>
    </subcellularLocation>
    <subcellularLocation>
        <location evidence="1">Membrane</location>
        <location evidence="1">Coated pit</location>
        <topology evidence="1">Peripheral membrane protein</topology>
        <orientation evidence="1">Cytoplasmic side</orientation>
    </subcellularLocation>
    <text evidence="1">Component of the coat surrounding the cytoplasmic face of coated vesicles in the plasma membrane.</text>
</comment>
<comment type="similarity">
    <text evidence="3">Belongs to the adaptor complexes large subunit family.</text>
</comment>
<comment type="caution">
    <text evidence="3">The gene for this protein is duplicated in strains AX3 and AX4. These strains contain a duplication of a segment of 750 kb of chromosome 2 compared to the corresponding sequence in strain AX2.</text>
</comment>